<sequence length="890" mass="97380">MTDVTIKTLAAERQTSVERLVQQFADAGIRKSADDSVSAQEKQTLIDHLNQKNSGPDKLTLQRKTRSTLNIPSTGGKSKSVQIEVRKKRTFVKRDPQEAERLAAEEQAQREAEEQARREAEESAKREAQQKAEREAAEQAKREAAEQAKREAAEKDKVSNQQDDMTKNAQAEKARREQEAAELKRKAEEEARRKLEEEARRVAEEARRMAEENKWTDNAEPTEDSSDYHVTTSQHARQAEDESDREVEGGRGRGRNAKAARPKKGNKHAESKADREEARAAVRGGKGGKRKGSSLQQGFQKPAQAVNRDVVIGETITVGELANKMAVKGSQVIKAMMKLGAMATINQVIDQETAQLVAEEMGHKVILRRENELEEAVMSDRDTGAAAEPRAPVVTIMGHVDHGKTSLLDYIRSTKVASGEAGGITQHIGAYHVETENGMITFLDTPGHAAFTSMRARGAQATDIVVLVVAADDGVMPQTIEAIQHAKAAQVPVVVAVNKIDKPEADPDRVKNELSQYGILPEEWGGESQFVHVSAKAGTGIDELLDAILLQAEVLELKAVRKGMASGAVIESFLDKGRGPVATVLVREGTLHKGDIVLCGFEYGRVRAMRNELGQEVLEAGPSIPVEILGLSGVPAAGDEVTVVRDEKKAREVALYRQGKFREVKLARQQKSKLENMFANMTEGEVHEVNIVLKADVQGSVEAISDSLLKLSTDEVKVKIIGSGVGGITETDATLAAASNAILVGFNVRADASARKVIEAESLDLRYYSVIYNLIDEVKAAMSGMLSPELKQQIIGLAEVRDVFKSPKFGAIAGCMVTEGVVKRHNPIRVLRDNVVIYEGELESLRRFKDDVNEVRNGMECGIGVKNYNDVRTGDVIEVFEIIEIQRTIA</sequence>
<gene>
    <name evidence="2" type="primary">infB</name>
    <name type="ordered locus">SDY_3347</name>
</gene>
<accession>Q32BG5</accession>
<proteinExistence type="inferred from homology"/>
<name>IF2_SHIDS</name>
<protein>
    <recommendedName>
        <fullName evidence="2">Translation initiation factor IF-2</fullName>
    </recommendedName>
</protein>
<comment type="function">
    <text evidence="2">One of the essential components for the initiation of protein synthesis. Protects formylmethionyl-tRNA from spontaneous hydrolysis and promotes its binding to the 30S ribosomal subunits. Also involved in the hydrolysis of GTP during the formation of the 70S ribosomal complex.</text>
</comment>
<comment type="subcellular location">
    <subcellularLocation>
        <location evidence="2">Cytoplasm</location>
    </subcellularLocation>
</comment>
<comment type="similarity">
    <text evidence="2">Belongs to the TRAFAC class translation factor GTPase superfamily. Classic translation factor GTPase family. IF-2 subfamily.</text>
</comment>
<keyword id="KW-0007">Acetylation</keyword>
<keyword id="KW-0963">Cytoplasm</keyword>
<keyword id="KW-0342">GTP-binding</keyword>
<keyword id="KW-0396">Initiation factor</keyword>
<keyword id="KW-0547">Nucleotide-binding</keyword>
<keyword id="KW-0648">Protein biosynthesis</keyword>
<keyword id="KW-1185">Reference proteome</keyword>
<reference key="1">
    <citation type="journal article" date="2005" name="Nucleic Acids Res.">
        <title>Genome dynamics and diversity of Shigella species, the etiologic agents of bacillary dysentery.</title>
        <authorList>
            <person name="Yang F."/>
            <person name="Yang J."/>
            <person name="Zhang X."/>
            <person name="Chen L."/>
            <person name="Jiang Y."/>
            <person name="Yan Y."/>
            <person name="Tang X."/>
            <person name="Wang J."/>
            <person name="Xiong Z."/>
            <person name="Dong J."/>
            <person name="Xue Y."/>
            <person name="Zhu Y."/>
            <person name="Xu X."/>
            <person name="Sun L."/>
            <person name="Chen S."/>
            <person name="Nie H."/>
            <person name="Peng J."/>
            <person name="Xu J."/>
            <person name="Wang Y."/>
            <person name="Yuan Z."/>
            <person name="Wen Y."/>
            <person name="Yao Z."/>
            <person name="Shen Y."/>
            <person name="Qiang B."/>
            <person name="Hou Y."/>
            <person name="Yu J."/>
            <person name="Jin Q."/>
        </authorList>
    </citation>
    <scope>NUCLEOTIDE SEQUENCE [LARGE SCALE GENOMIC DNA]</scope>
    <source>
        <strain>Sd197</strain>
    </source>
</reference>
<feature type="chain" id="PRO_0000228242" description="Translation initiation factor IF-2">
    <location>
        <begin position="1"/>
        <end position="890"/>
    </location>
</feature>
<feature type="domain" description="tr-type G">
    <location>
        <begin position="389"/>
        <end position="558"/>
    </location>
</feature>
<feature type="region of interest" description="Disordered" evidence="3">
    <location>
        <begin position="45"/>
        <end position="302"/>
    </location>
</feature>
<feature type="region of interest" description="G1" evidence="1">
    <location>
        <begin position="398"/>
        <end position="405"/>
    </location>
</feature>
<feature type="region of interest" description="G2" evidence="1">
    <location>
        <begin position="423"/>
        <end position="427"/>
    </location>
</feature>
<feature type="region of interest" description="G3" evidence="1">
    <location>
        <begin position="444"/>
        <end position="447"/>
    </location>
</feature>
<feature type="region of interest" description="G4" evidence="1">
    <location>
        <begin position="498"/>
        <end position="501"/>
    </location>
</feature>
<feature type="region of interest" description="G5" evidence="1">
    <location>
        <begin position="534"/>
        <end position="536"/>
    </location>
</feature>
<feature type="compositionally biased region" description="Polar residues" evidence="3">
    <location>
        <begin position="67"/>
        <end position="81"/>
    </location>
</feature>
<feature type="compositionally biased region" description="Basic and acidic residues" evidence="3">
    <location>
        <begin position="92"/>
        <end position="217"/>
    </location>
</feature>
<feature type="compositionally biased region" description="Basic residues" evidence="3">
    <location>
        <begin position="252"/>
        <end position="266"/>
    </location>
</feature>
<feature type="compositionally biased region" description="Basic and acidic residues" evidence="3">
    <location>
        <begin position="267"/>
        <end position="280"/>
    </location>
</feature>
<feature type="binding site" evidence="2">
    <location>
        <begin position="398"/>
        <end position="405"/>
    </location>
    <ligand>
        <name>GTP</name>
        <dbReference type="ChEBI" id="CHEBI:37565"/>
    </ligand>
</feature>
<feature type="binding site" evidence="2">
    <location>
        <begin position="444"/>
        <end position="448"/>
    </location>
    <ligand>
        <name>GTP</name>
        <dbReference type="ChEBI" id="CHEBI:37565"/>
    </ligand>
</feature>
<feature type="binding site" evidence="2">
    <location>
        <begin position="498"/>
        <end position="501"/>
    </location>
    <ligand>
        <name>GTP</name>
        <dbReference type="ChEBI" id="CHEBI:37565"/>
    </ligand>
</feature>
<feature type="modified residue" description="N6-acetyllysine" evidence="1">
    <location>
        <position position="808"/>
    </location>
</feature>
<organism>
    <name type="scientific">Shigella dysenteriae serotype 1 (strain Sd197)</name>
    <dbReference type="NCBI Taxonomy" id="300267"/>
    <lineage>
        <taxon>Bacteria</taxon>
        <taxon>Pseudomonadati</taxon>
        <taxon>Pseudomonadota</taxon>
        <taxon>Gammaproteobacteria</taxon>
        <taxon>Enterobacterales</taxon>
        <taxon>Enterobacteriaceae</taxon>
        <taxon>Shigella</taxon>
    </lineage>
</organism>
<evidence type="ECO:0000250" key="1"/>
<evidence type="ECO:0000255" key="2">
    <source>
        <dbReference type="HAMAP-Rule" id="MF_00100"/>
    </source>
</evidence>
<evidence type="ECO:0000256" key="3">
    <source>
        <dbReference type="SAM" id="MobiDB-lite"/>
    </source>
</evidence>
<dbReference type="EMBL" id="CP000034">
    <property type="protein sequence ID" value="ABB63340.1"/>
    <property type="molecule type" value="Genomic_DNA"/>
</dbReference>
<dbReference type="RefSeq" id="WP_000133057.1">
    <property type="nucleotide sequence ID" value="NC_007606.1"/>
</dbReference>
<dbReference type="RefSeq" id="YP_404831.1">
    <property type="nucleotide sequence ID" value="NC_007606.1"/>
</dbReference>
<dbReference type="SMR" id="Q32BG5"/>
<dbReference type="STRING" id="300267.SDY_3347"/>
<dbReference type="EnsemblBacteria" id="ABB63340">
    <property type="protein sequence ID" value="ABB63340"/>
    <property type="gene ID" value="SDY_3347"/>
</dbReference>
<dbReference type="KEGG" id="sdy:SDY_3347"/>
<dbReference type="PATRIC" id="fig|300267.13.peg.4001"/>
<dbReference type="HOGENOM" id="CLU_006301_6_3_6"/>
<dbReference type="Proteomes" id="UP000002716">
    <property type="component" value="Chromosome"/>
</dbReference>
<dbReference type="GO" id="GO:0005829">
    <property type="term" value="C:cytosol"/>
    <property type="evidence" value="ECO:0007669"/>
    <property type="project" value="TreeGrafter"/>
</dbReference>
<dbReference type="GO" id="GO:0005525">
    <property type="term" value="F:GTP binding"/>
    <property type="evidence" value="ECO:0007669"/>
    <property type="project" value="UniProtKB-KW"/>
</dbReference>
<dbReference type="GO" id="GO:0003924">
    <property type="term" value="F:GTPase activity"/>
    <property type="evidence" value="ECO:0007669"/>
    <property type="project" value="UniProtKB-UniRule"/>
</dbReference>
<dbReference type="GO" id="GO:0097216">
    <property type="term" value="F:guanosine tetraphosphate binding"/>
    <property type="evidence" value="ECO:0007669"/>
    <property type="project" value="UniProtKB-ARBA"/>
</dbReference>
<dbReference type="GO" id="GO:0003743">
    <property type="term" value="F:translation initiation factor activity"/>
    <property type="evidence" value="ECO:0007669"/>
    <property type="project" value="UniProtKB-UniRule"/>
</dbReference>
<dbReference type="CDD" id="cd01887">
    <property type="entry name" value="IF2_eIF5B"/>
    <property type="match status" value="1"/>
</dbReference>
<dbReference type="CDD" id="cd03702">
    <property type="entry name" value="IF2_mtIF2_II"/>
    <property type="match status" value="1"/>
</dbReference>
<dbReference type="CDD" id="cd03692">
    <property type="entry name" value="mtIF2_IVc"/>
    <property type="match status" value="1"/>
</dbReference>
<dbReference type="FunFam" id="2.40.30.10:FF:000007">
    <property type="entry name" value="Translation initiation factor IF-2"/>
    <property type="match status" value="1"/>
</dbReference>
<dbReference type="FunFam" id="2.40.30.10:FF:000008">
    <property type="entry name" value="Translation initiation factor IF-2"/>
    <property type="match status" value="1"/>
</dbReference>
<dbReference type="FunFam" id="3.30.56.50:FF:000001">
    <property type="entry name" value="Translation initiation factor IF-2"/>
    <property type="match status" value="1"/>
</dbReference>
<dbReference type="FunFam" id="3.40.50.10050:FF:000001">
    <property type="entry name" value="Translation initiation factor IF-2"/>
    <property type="match status" value="1"/>
</dbReference>
<dbReference type="FunFam" id="3.40.50.300:FF:000019">
    <property type="entry name" value="Translation initiation factor IF-2"/>
    <property type="match status" value="1"/>
</dbReference>
<dbReference type="Gene3D" id="3.40.50.300">
    <property type="entry name" value="P-loop containing nucleotide triphosphate hydrolases"/>
    <property type="match status" value="1"/>
</dbReference>
<dbReference type="Gene3D" id="3.30.56.50">
    <property type="entry name" value="Putative DNA-binding domain, N-terminal subdomain of bacterial translation initiation factor IF2"/>
    <property type="match status" value="1"/>
</dbReference>
<dbReference type="Gene3D" id="2.40.30.10">
    <property type="entry name" value="Translation factors"/>
    <property type="match status" value="2"/>
</dbReference>
<dbReference type="Gene3D" id="3.40.50.10050">
    <property type="entry name" value="Translation initiation factor IF- 2, domain 3"/>
    <property type="match status" value="1"/>
</dbReference>
<dbReference type="HAMAP" id="MF_00100_B">
    <property type="entry name" value="IF_2_B"/>
    <property type="match status" value="1"/>
</dbReference>
<dbReference type="InterPro" id="IPR009061">
    <property type="entry name" value="DNA-bd_dom_put_sf"/>
</dbReference>
<dbReference type="InterPro" id="IPR053905">
    <property type="entry name" value="EF-G-like_DII"/>
</dbReference>
<dbReference type="InterPro" id="IPR004161">
    <property type="entry name" value="EFTu-like_2"/>
</dbReference>
<dbReference type="InterPro" id="IPR013575">
    <property type="entry name" value="IF2_assoc_dom_bac"/>
</dbReference>
<dbReference type="InterPro" id="IPR044145">
    <property type="entry name" value="IF2_II"/>
</dbReference>
<dbReference type="InterPro" id="IPR006847">
    <property type="entry name" value="IF2_N"/>
</dbReference>
<dbReference type="InterPro" id="IPR027417">
    <property type="entry name" value="P-loop_NTPase"/>
</dbReference>
<dbReference type="InterPro" id="IPR005225">
    <property type="entry name" value="Small_GTP-bd"/>
</dbReference>
<dbReference type="InterPro" id="IPR000795">
    <property type="entry name" value="T_Tr_GTP-bd_dom"/>
</dbReference>
<dbReference type="InterPro" id="IPR000178">
    <property type="entry name" value="TF_IF2_bacterial-like"/>
</dbReference>
<dbReference type="InterPro" id="IPR015760">
    <property type="entry name" value="TIF_IF2"/>
</dbReference>
<dbReference type="InterPro" id="IPR023115">
    <property type="entry name" value="TIF_IF2_dom3"/>
</dbReference>
<dbReference type="InterPro" id="IPR036925">
    <property type="entry name" value="TIF_IF2_dom3_sf"/>
</dbReference>
<dbReference type="InterPro" id="IPR009000">
    <property type="entry name" value="Transl_B-barrel_sf"/>
</dbReference>
<dbReference type="NCBIfam" id="TIGR00487">
    <property type="entry name" value="IF-2"/>
    <property type="match status" value="1"/>
</dbReference>
<dbReference type="NCBIfam" id="TIGR00231">
    <property type="entry name" value="small_GTP"/>
    <property type="match status" value="1"/>
</dbReference>
<dbReference type="PANTHER" id="PTHR43381:SF5">
    <property type="entry name" value="TR-TYPE G DOMAIN-CONTAINING PROTEIN"/>
    <property type="match status" value="1"/>
</dbReference>
<dbReference type="PANTHER" id="PTHR43381">
    <property type="entry name" value="TRANSLATION INITIATION FACTOR IF-2-RELATED"/>
    <property type="match status" value="1"/>
</dbReference>
<dbReference type="Pfam" id="PF22042">
    <property type="entry name" value="EF-G_D2"/>
    <property type="match status" value="1"/>
</dbReference>
<dbReference type="Pfam" id="PF00009">
    <property type="entry name" value="GTP_EFTU"/>
    <property type="match status" value="1"/>
</dbReference>
<dbReference type="Pfam" id="PF03144">
    <property type="entry name" value="GTP_EFTU_D2"/>
    <property type="match status" value="1"/>
</dbReference>
<dbReference type="Pfam" id="PF11987">
    <property type="entry name" value="IF-2"/>
    <property type="match status" value="1"/>
</dbReference>
<dbReference type="Pfam" id="PF08364">
    <property type="entry name" value="IF2_assoc"/>
    <property type="match status" value="1"/>
</dbReference>
<dbReference type="Pfam" id="PF04760">
    <property type="entry name" value="IF2_N"/>
    <property type="match status" value="2"/>
</dbReference>
<dbReference type="SUPFAM" id="SSF52156">
    <property type="entry name" value="Initiation factor IF2/eIF5b, domain 3"/>
    <property type="match status" value="1"/>
</dbReference>
<dbReference type="SUPFAM" id="SSF52540">
    <property type="entry name" value="P-loop containing nucleoside triphosphate hydrolases"/>
    <property type="match status" value="1"/>
</dbReference>
<dbReference type="SUPFAM" id="SSF46955">
    <property type="entry name" value="Putative DNA-binding domain"/>
    <property type="match status" value="1"/>
</dbReference>
<dbReference type="SUPFAM" id="SSF50447">
    <property type="entry name" value="Translation proteins"/>
    <property type="match status" value="2"/>
</dbReference>
<dbReference type="PROSITE" id="PS51722">
    <property type="entry name" value="G_TR_2"/>
    <property type="match status" value="1"/>
</dbReference>
<dbReference type="PROSITE" id="PS01176">
    <property type="entry name" value="IF2"/>
    <property type="match status" value="1"/>
</dbReference>